<evidence type="ECO:0000255" key="1">
    <source>
        <dbReference type="HAMAP-Rule" id="MF_00375"/>
    </source>
</evidence>
<keyword id="KW-0963">Cytoplasm</keyword>
<keyword id="KW-0413">Isomerase</keyword>
<keyword id="KW-0627">Porphyrin biosynthesis</keyword>
<keyword id="KW-0663">Pyridoxal phosphate</keyword>
<organism>
    <name type="scientific">Histophilus somni (strain 129Pt)</name>
    <name type="common">Haemophilus somnus</name>
    <dbReference type="NCBI Taxonomy" id="205914"/>
    <lineage>
        <taxon>Bacteria</taxon>
        <taxon>Pseudomonadati</taxon>
        <taxon>Pseudomonadota</taxon>
        <taxon>Gammaproteobacteria</taxon>
        <taxon>Pasteurellales</taxon>
        <taxon>Pasteurellaceae</taxon>
        <taxon>Histophilus</taxon>
    </lineage>
</organism>
<protein>
    <recommendedName>
        <fullName evidence="1">Glutamate-1-semialdehyde 2,1-aminomutase</fullName>
        <shortName evidence="1">GSA</shortName>
        <ecNumber evidence="1">5.4.3.8</ecNumber>
    </recommendedName>
    <alternativeName>
        <fullName evidence="1">Glutamate-1-semialdehyde aminotransferase</fullName>
        <shortName evidence="1">GSA-AT</shortName>
    </alternativeName>
</protein>
<sequence length="432" mass="46507">MTTSATLFSRAQQVIPGGVNSPVRAFKGVGGTPVFIEKANGAYIFDTEGKQYIDYVGSWGPMILGHNHPSILSAVLKTAENGLSFGTPTPLEIELAELICQLVPSIEMVRMVNSGTEATMSAIRLARGYTKRDKILKFEGCYHGHSDSLLVKAGSGSLTLGQPSSPGVPEDFAKHTITCEYNNLQSVKNAFEQYPDQIACVIVEPVAGNMNCILPKQDFLQGLRQLCNEYGSLFIIDEVMTGFRVALGGAQSYYEVTPDLTTLGKVIGGGMPVGAFGGKKEIMQYIAPTGPVYQAGTLSGNPIAMSAGIACLNELKKEGNEQRLAMLTKKLALGLKNLANQHNIPLVVNYVGGMFGIFFTTQNEVTSYQQAIQCDVEKFNLFFHKMLEQGVYLAPSAFEAGFMSLAHTDADIDRTLQAADIAFASLCSSSFS</sequence>
<gene>
    <name evidence="1" type="primary">hemL</name>
    <name type="ordered locus">HS_1229</name>
</gene>
<reference key="1">
    <citation type="journal article" date="2007" name="J. Bacteriol.">
        <title>Complete genome sequence of Haemophilus somnus (Histophilus somni) strain 129Pt and comparison to Haemophilus ducreyi 35000HP and Haemophilus influenzae Rd.</title>
        <authorList>
            <person name="Challacombe J.F."/>
            <person name="Duncan A.J."/>
            <person name="Brettin T.S."/>
            <person name="Bruce D."/>
            <person name="Chertkov O."/>
            <person name="Detter J.C."/>
            <person name="Han C.S."/>
            <person name="Misra M."/>
            <person name="Richardson P."/>
            <person name="Tapia R."/>
            <person name="Thayer N."/>
            <person name="Xie G."/>
            <person name="Inzana T.J."/>
        </authorList>
    </citation>
    <scope>NUCLEOTIDE SEQUENCE [LARGE SCALE GENOMIC DNA]</scope>
    <source>
        <strain>129Pt</strain>
    </source>
</reference>
<name>GSA_HISS1</name>
<accession>Q0I3R7</accession>
<feature type="chain" id="PRO_0000300917" description="Glutamate-1-semialdehyde 2,1-aminomutase">
    <location>
        <begin position="1"/>
        <end position="432"/>
    </location>
</feature>
<feature type="modified residue" description="N6-(pyridoxal phosphate)lysine" evidence="1">
    <location>
        <position position="265"/>
    </location>
</feature>
<dbReference type="EC" id="5.4.3.8" evidence="1"/>
<dbReference type="EMBL" id="CP000436">
    <property type="protein sequence ID" value="ABI25504.1"/>
    <property type="molecule type" value="Genomic_DNA"/>
</dbReference>
<dbReference type="SMR" id="Q0I3R7"/>
<dbReference type="KEGG" id="hso:HS_1229"/>
<dbReference type="eggNOG" id="COG0001">
    <property type="taxonomic scope" value="Bacteria"/>
</dbReference>
<dbReference type="HOGENOM" id="CLU_016922_1_5_6"/>
<dbReference type="UniPathway" id="UPA00251">
    <property type="reaction ID" value="UER00317"/>
</dbReference>
<dbReference type="GO" id="GO:0005737">
    <property type="term" value="C:cytoplasm"/>
    <property type="evidence" value="ECO:0007669"/>
    <property type="project" value="UniProtKB-SubCell"/>
</dbReference>
<dbReference type="GO" id="GO:0042286">
    <property type="term" value="F:glutamate-1-semialdehyde 2,1-aminomutase activity"/>
    <property type="evidence" value="ECO:0007669"/>
    <property type="project" value="UniProtKB-UniRule"/>
</dbReference>
<dbReference type="GO" id="GO:0030170">
    <property type="term" value="F:pyridoxal phosphate binding"/>
    <property type="evidence" value="ECO:0007669"/>
    <property type="project" value="InterPro"/>
</dbReference>
<dbReference type="GO" id="GO:0008483">
    <property type="term" value="F:transaminase activity"/>
    <property type="evidence" value="ECO:0007669"/>
    <property type="project" value="InterPro"/>
</dbReference>
<dbReference type="GO" id="GO:0006782">
    <property type="term" value="P:protoporphyrinogen IX biosynthetic process"/>
    <property type="evidence" value="ECO:0007669"/>
    <property type="project" value="UniProtKB-UniRule"/>
</dbReference>
<dbReference type="CDD" id="cd00610">
    <property type="entry name" value="OAT_like"/>
    <property type="match status" value="1"/>
</dbReference>
<dbReference type="FunFam" id="3.40.640.10:FF:000021">
    <property type="entry name" value="Glutamate-1-semialdehyde 2,1-aminomutase"/>
    <property type="match status" value="1"/>
</dbReference>
<dbReference type="Gene3D" id="3.90.1150.10">
    <property type="entry name" value="Aspartate Aminotransferase, domain 1"/>
    <property type="match status" value="1"/>
</dbReference>
<dbReference type="Gene3D" id="3.40.640.10">
    <property type="entry name" value="Type I PLP-dependent aspartate aminotransferase-like (Major domain)"/>
    <property type="match status" value="1"/>
</dbReference>
<dbReference type="HAMAP" id="MF_00375">
    <property type="entry name" value="HemL_aminotrans_3"/>
    <property type="match status" value="1"/>
</dbReference>
<dbReference type="InterPro" id="IPR004639">
    <property type="entry name" value="4pyrrol_synth_GluAld_NH2Trfase"/>
</dbReference>
<dbReference type="InterPro" id="IPR005814">
    <property type="entry name" value="Aminotrans_3"/>
</dbReference>
<dbReference type="InterPro" id="IPR049704">
    <property type="entry name" value="Aminotrans_3_PPA_site"/>
</dbReference>
<dbReference type="InterPro" id="IPR015424">
    <property type="entry name" value="PyrdxlP-dep_Trfase"/>
</dbReference>
<dbReference type="InterPro" id="IPR015421">
    <property type="entry name" value="PyrdxlP-dep_Trfase_major"/>
</dbReference>
<dbReference type="InterPro" id="IPR015422">
    <property type="entry name" value="PyrdxlP-dep_Trfase_small"/>
</dbReference>
<dbReference type="NCBIfam" id="TIGR00713">
    <property type="entry name" value="hemL"/>
    <property type="match status" value="1"/>
</dbReference>
<dbReference type="NCBIfam" id="NF000818">
    <property type="entry name" value="PRK00062.1"/>
    <property type="match status" value="1"/>
</dbReference>
<dbReference type="PANTHER" id="PTHR43713">
    <property type="entry name" value="GLUTAMATE-1-SEMIALDEHYDE 2,1-AMINOMUTASE"/>
    <property type="match status" value="1"/>
</dbReference>
<dbReference type="PANTHER" id="PTHR43713:SF3">
    <property type="entry name" value="GLUTAMATE-1-SEMIALDEHYDE 2,1-AMINOMUTASE 1, CHLOROPLASTIC-RELATED"/>
    <property type="match status" value="1"/>
</dbReference>
<dbReference type="Pfam" id="PF00202">
    <property type="entry name" value="Aminotran_3"/>
    <property type="match status" value="1"/>
</dbReference>
<dbReference type="SUPFAM" id="SSF53383">
    <property type="entry name" value="PLP-dependent transferases"/>
    <property type="match status" value="1"/>
</dbReference>
<dbReference type="PROSITE" id="PS00600">
    <property type="entry name" value="AA_TRANSFER_CLASS_3"/>
    <property type="match status" value="1"/>
</dbReference>
<comment type="catalytic activity">
    <reaction evidence="1">
        <text>(S)-4-amino-5-oxopentanoate = 5-aminolevulinate</text>
        <dbReference type="Rhea" id="RHEA:14265"/>
        <dbReference type="ChEBI" id="CHEBI:57501"/>
        <dbReference type="ChEBI" id="CHEBI:356416"/>
        <dbReference type="EC" id="5.4.3.8"/>
    </reaction>
</comment>
<comment type="cofactor">
    <cofactor evidence="1">
        <name>pyridoxal 5'-phosphate</name>
        <dbReference type="ChEBI" id="CHEBI:597326"/>
    </cofactor>
</comment>
<comment type="pathway">
    <text evidence="1">Porphyrin-containing compound metabolism; protoporphyrin-IX biosynthesis; 5-aminolevulinate from L-glutamyl-tRNA(Glu): step 2/2.</text>
</comment>
<comment type="subunit">
    <text evidence="1">Homodimer.</text>
</comment>
<comment type="subcellular location">
    <subcellularLocation>
        <location evidence="1">Cytoplasm</location>
    </subcellularLocation>
</comment>
<comment type="similarity">
    <text evidence="1">Belongs to the class-III pyridoxal-phosphate-dependent aminotransferase family. HemL subfamily.</text>
</comment>
<proteinExistence type="inferred from homology"/>